<dbReference type="PIR" id="S78574">
    <property type="entry name" value="S78574"/>
</dbReference>
<dbReference type="SMR" id="P68253"/>
<dbReference type="Proteomes" id="UP000002356">
    <property type="component" value="Unplaced"/>
</dbReference>
<dbReference type="GO" id="GO:0005737">
    <property type="term" value="C:cytoplasm"/>
    <property type="evidence" value="ECO:0000250"/>
    <property type="project" value="UniProtKB"/>
</dbReference>
<dbReference type="GO" id="GO:0005829">
    <property type="term" value="C:cytosol"/>
    <property type="evidence" value="ECO:0007669"/>
    <property type="project" value="UniProtKB-SubCell"/>
</dbReference>
<dbReference type="GO" id="GO:0005759">
    <property type="term" value="C:mitochondrial matrix"/>
    <property type="evidence" value="ECO:0007669"/>
    <property type="project" value="UniProtKB-SubCell"/>
</dbReference>
<dbReference type="GO" id="GO:0005159">
    <property type="term" value="F:insulin-like growth factor receptor binding"/>
    <property type="evidence" value="ECO:0000250"/>
    <property type="project" value="UniProtKB"/>
</dbReference>
<dbReference type="GO" id="GO:0140031">
    <property type="term" value="F:phosphorylation-dependent protein binding"/>
    <property type="evidence" value="ECO:0000250"/>
    <property type="project" value="UniProtKB"/>
</dbReference>
<dbReference type="GO" id="GO:0140311">
    <property type="term" value="F:protein sequestering activity"/>
    <property type="evidence" value="ECO:0000250"/>
    <property type="project" value="UniProtKB"/>
</dbReference>
<dbReference type="GO" id="GO:0022409">
    <property type="term" value="P:positive regulation of cell-cell adhesion"/>
    <property type="evidence" value="ECO:0000250"/>
    <property type="project" value="UniProtKB"/>
</dbReference>
<dbReference type="GO" id="GO:0045664">
    <property type="term" value="P:regulation of neuron differentiation"/>
    <property type="evidence" value="ECO:0000250"/>
    <property type="project" value="UniProtKB"/>
</dbReference>
<dbReference type="GO" id="GO:0032880">
    <property type="term" value="P:regulation of protein localization"/>
    <property type="evidence" value="ECO:0000250"/>
    <property type="project" value="UniProtKB"/>
</dbReference>
<dbReference type="GO" id="GO:0048167">
    <property type="term" value="P:regulation of synaptic plasticity"/>
    <property type="evidence" value="ECO:0000250"/>
    <property type="project" value="UniProtKB"/>
</dbReference>
<dbReference type="FunFam" id="1.20.190.20:FF:000004">
    <property type="entry name" value="14-3-3 protein gamma"/>
    <property type="match status" value="1"/>
</dbReference>
<dbReference type="Gene3D" id="1.20.190.20">
    <property type="entry name" value="14-3-3 domain"/>
    <property type="match status" value="2"/>
</dbReference>
<dbReference type="InterPro" id="IPR000308">
    <property type="entry name" value="14-3-3"/>
</dbReference>
<dbReference type="InterPro" id="IPR023409">
    <property type="entry name" value="14-3-3_CS"/>
</dbReference>
<dbReference type="InterPro" id="IPR036815">
    <property type="entry name" value="14-3-3_dom_sf"/>
</dbReference>
<dbReference type="InterPro" id="IPR023410">
    <property type="entry name" value="14-3-3_domain"/>
</dbReference>
<dbReference type="PANTHER" id="PTHR18860">
    <property type="entry name" value="14-3-3 PROTEIN"/>
    <property type="match status" value="1"/>
</dbReference>
<dbReference type="Pfam" id="PF00244">
    <property type="entry name" value="14-3-3"/>
    <property type="match status" value="2"/>
</dbReference>
<dbReference type="SMART" id="SM00101">
    <property type="entry name" value="14_3_3"/>
    <property type="match status" value="1"/>
</dbReference>
<dbReference type="SUPFAM" id="SSF48445">
    <property type="entry name" value="14-3-3 protein"/>
    <property type="match status" value="1"/>
</dbReference>
<dbReference type="PROSITE" id="PS00796">
    <property type="entry name" value="1433_1"/>
    <property type="match status" value="1"/>
</dbReference>
<dbReference type="PROSITE" id="PS00797">
    <property type="entry name" value="1433_2"/>
    <property type="match status" value="1"/>
</dbReference>
<evidence type="ECO:0000250" key="1">
    <source>
        <dbReference type="UniProtKB" id="P61981"/>
    </source>
</evidence>
<evidence type="ECO:0000250" key="2">
    <source>
        <dbReference type="UniProtKB" id="P61982"/>
    </source>
</evidence>
<evidence type="ECO:0000250" key="3">
    <source>
        <dbReference type="UniProtKB" id="P61983"/>
    </source>
</evidence>
<evidence type="ECO:0000269" key="4">
    <source>
    </source>
</evidence>
<evidence type="ECO:0000305" key="5"/>
<evidence type="ECO:0000305" key="6">
    <source>
    </source>
</evidence>
<organism>
    <name type="scientific">Ovis aries</name>
    <name type="common">Sheep</name>
    <dbReference type="NCBI Taxonomy" id="9940"/>
    <lineage>
        <taxon>Eukaryota</taxon>
        <taxon>Metazoa</taxon>
        <taxon>Chordata</taxon>
        <taxon>Craniata</taxon>
        <taxon>Vertebrata</taxon>
        <taxon>Euteleostomi</taxon>
        <taxon>Mammalia</taxon>
        <taxon>Eutheria</taxon>
        <taxon>Laurasiatheria</taxon>
        <taxon>Artiodactyla</taxon>
        <taxon>Ruminantia</taxon>
        <taxon>Pecora</taxon>
        <taxon>Bovidae</taxon>
        <taxon>Caprinae</taxon>
        <taxon>Ovis</taxon>
    </lineage>
</organism>
<feature type="chain" id="PRO_0000058610" description="14-3-3 protein gamma">
    <location>
        <begin position="1" status="less than"/>
        <end position="158" status="greater than"/>
    </location>
</feature>
<feature type="region of interest" description="Interaction with SPATA18/MIEAP">
    <location>
        <begin position="1" status="less than"/>
        <end position="158" status="greater than"/>
    </location>
</feature>
<feature type="site" description="Interaction with phosphoserine on interacting protein" evidence="1">
    <location>
        <position position="34"/>
    </location>
</feature>
<feature type="site" description="Interaction with phosphoserine on interacting protein" evidence="1">
    <location>
        <position position="59"/>
    </location>
</feature>
<feature type="modified residue" description="Phosphoserine" evidence="1">
    <location>
        <position position="48"/>
    </location>
</feature>
<feature type="modified residue" description="Phosphotyrosine" evidence="3">
    <location>
        <position position="60"/>
    </location>
</feature>
<feature type="modified residue" description="Phosphothreonine" evidence="1">
    <location>
        <position position="72"/>
    </location>
</feature>
<feature type="modified residue" description="Phosphoserine" evidence="3">
    <location>
        <position position="130"/>
    </location>
</feature>
<feature type="modified residue" description="Phosphothreonine" evidence="1">
    <location>
        <position position="149"/>
    </location>
</feature>
<feature type="modified residue" description="Phosphoserine" evidence="1">
    <location>
        <position position="150"/>
    </location>
</feature>
<feature type="non-consecutive residues" evidence="5">
    <location>
        <begin position="48"/>
        <end position="49"/>
    </location>
</feature>
<feature type="non-consecutive residues" evidence="5">
    <location>
        <begin position="113"/>
        <end position="114"/>
    </location>
</feature>
<feature type="non-terminal residue">
    <location>
        <position position="1"/>
    </location>
</feature>
<feature type="non-terminal residue">
    <location>
        <position position="158"/>
    </location>
</feature>
<keyword id="KW-0963">Cytoplasm</keyword>
<keyword id="KW-0903">Direct protein sequencing</keyword>
<keyword id="KW-0496">Mitochondrion</keyword>
<keyword id="KW-0597">Phosphoprotein</keyword>
<keyword id="KW-1185">Reference proteome</keyword>
<reference key="1">
    <citation type="journal article" date="1992" name="Eur. J. Biochem.">
        <title>Multiple isoforms of a protein kinase C inhibitor (KCIP-1/14-3-3) from sheep brain. Amino acid sequence of phosphorylated forms.</title>
        <authorList>
            <person name="Toker A."/>
            <person name="Sellers L.A."/>
            <person name="Amess B."/>
            <person name="Patel Y."/>
            <person name="Harris A."/>
            <person name="Aitken A."/>
        </authorList>
    </citation>
    <scope>PROTEIN SEQUENCE</scope>
    <scope>SUBCELLULAR LOCATION</scope>
    <source>
        <tissue>Brain</tissue>
    </source>
</reference>
<reference key="2">
    <citation type="journal article" date="2001" name="Proc. Natl. Acad. Sci. U.S.A.">
        <title>Role of a pineal cAMP-operated arylalkylamine N-acetyltransferase/14-3-3-binding switch in melatonin synthesis.</title>
        <authorList>
            <person name="Ganguly S."/>
            <person name="Gastel J.A."/>
            <person name="Weller J.L."/>
            <person name="Schwartz C."/>
            <person name="Jaffe H."/>
            <person name="Namboodiri M.A."/>
            <person name="Coon S.L."/>
            <person name="Hickman A.B."/>
            <person name="Rollag M."/>
            <person name="Obsil T."/>
            <person name="Beauverger P."/>
            <person name="Ferry G."/>
            <person name="Boutin J.A."/>
            <person name="Klein D.C."/>
        </authorList>
    </citation>
    <scope>INTERACTION WITH AANAT</scope>
</reference>
<sequence>AAAMKNVTELNEPLSNEERNLLSVAYKNVVGARRSSWRVISSIEQKTSFYLKMKGDYYRYLAEVATGEKRATVVESSEKAYSEAHEISKEHMQPTHPIRLGLALNYSVFYYEITAFDDAIAELDTLNEDSYKDSTLIMQLLRDNLTLWTSDQQDDDGG</sequence>
<proteinExistence type="evidence at protein level"/>
<protein>
    <recommendedName>
        <fullName evidence="1">14-3-3 protein gamma</fullName>
    </recommendedName>
    <alternativeName>
        <fullName>Protein kinase C inhibitor protein 1</fullName>
        <shortName>KCIP-1</shortName>
    </alternativeName>
</protein>
<gene>
    <name evidence="1" type="primary">YWHAG</name>
</gene>
<comment type="function">
    <text evidence="1">Adapter protein implicated in the regulation of a large spectrum of both general and specialized signaling pathways. Binds to a large number of partners, usually by recognition of a phosphoserine or phosphothreonine motif. Binding generally results in the modulation of the activity of the binding partner. Promotes inactivation of WDR24 component of the GATOR2 complex by binding to phosphorylated WDR24. Participates in the positive regulation of NMDA glutamate receptor activity by promoting the L-glutamate secretion through interaction with BEST1. Reduces keratinocyte intercellular adhesion, via interacting with PKP1 and sequestering it in the cytoplasm, thereby reducing its incorporation into desmosomes. Plays a role in mitochondrial protein catabolic process (also named MALM) that promotes the degradation of damaged proteins inside mitochondria (By similarity).</text>
</comment>
<comment type="subunit">
    <text evidence="1 2 4">Homodimer (By similarity). Part of a complex that contains DSG3, PKP1, YAP1 and YWHAG; the complex is required for localization of DSG3 and YAP1 to the cell membrane in keratinocytes (By similarity). Interacts with SAMSN1 (By similarity). Interacts with RAF1, SSH1 and CRTC2/TORC2 (By similarity). Interacts with ABL1 (phosphorylated form); the interaction retains it in the cytoplasm (By similarity). Interacts with GAB2 (By similarity). Interacts with MDM4 (phosphorylated); negatively regulates MDM4 activity toward TP53 (By similarity). Interacts with PKA-phosphorylated AANAT and SIRT2 (PubMed:11427721). Interacts with the 'Thr-369' phosphorylated form of DAPK2 (By similarity). Interacts with PI4KB, TBC1D22A and TBC1D22B (By similarity). Interacts with SLITRK1 (By similarity). Interacts with LRRK2; this interaction is dependent on LRRK2 phosphorylation (By similarity). Interacts with MARK2 and MARK3 (By similarity). Interacts with MEFV (By similarity). Interacts with ENDOG, TSC2 and PIK3C3; interaction with ENDOG weakens its interaction with TSC2 and PIK3C3 (By similarity). Interacts with (phosphorylated) WDR24 (By similarity). Interacts with BEST1; this interaction promotes L-glutamate channel activity leading to the positive regulation of NMDA glutamate receptor activity through the L-glutamate secretion (By similarity). Interacts with PKP1 (when phosphorylated); the interaction results in translocation of PKP1 to the cytoplasm and loss of intercellular adhesion in keratinocytes (By similarity). Interacts with SPATA18/MIEAP; a protein that also plays a role in MALM (By similarity).</text>
</comment>
<comment type="subcellular location">
    <subcellularLocation>
        <location evidence="6">Cytoplasm</location>
        <location evidence="6">Cytosol</location>
    </subcellularLocation>
    <subcellularLocation>
        <location evidence="1">Mitochondrion matrix</location>
    </subcellularLocation>
    <text evidence="1">Translocates to the mitochondrial matrix following induction of MALM (mitochondrial protein catabolic process).</text>
</comment>
<comment type="PTM">
    <text evidence="1">Phosphorylated by various PKC isozymes.</text>
</comment>
<comment type="similarity">
    <text evidence="5">Belongs to the 14-3-3 family.</text>
</comment>
<accession>P68253</accession>
<accession>P29359</accession>
<name>1433G_SHEEP</name>